<proteinExistence type="evidence at protein level"/>
<protein>
    <recommendedName>
        <fullName evidence="5">RNA-binding protein YlxQ</fullName>
    </recommendedName>
</protein>
<keyword id="KW-0002">3D-structure</keyword>
<keyword id="KW-1185">Reference proteome</keyword>
<keyword id="KW-0694">RNA-binding</keyword>
<dbReference type="EMBL" id="Z18631">
    <property type="protein sequence ID" value="CAA79233.1"/>
    <property type="molecule type" value="Genomic_DNA"/>
</dbReference>
<dbReference type="EMBL" id="AL009126">
    <property type="protein sequence ID" value="CAB13535.1"/>
    <property type="molecule type" value="Genomic_DNA"/>
</dbReference>
<dbReference type="PIR" id="E36905">
    <property type="entry name" value="E36905"/>
</dbReference>
<dbReference type="RefSeq" id="NP_389544.1">
    <property type="nucleotide sequence ID" value="NC_000964.3"/>
</dbReference>
<dbReference type="RefSeq" id="WP_003220946.1">
    <property type="nucleotide sequence ID" value="NZ_OZ025638.1"/>
</dbReference>
<dbReference type="PDB" id="3V7Q">
    <property type="method" value="X-ray"/>
    <property type="resolution" value="1.55 A"/>
    <property type="chains" value="A/B/C=2-100"/>
</dbReference>
<dbReference type="PDBsum" id="3V7Q"/>
<dbReference type="SMR" id="P32729"/>
<dbReference type="FunCoup" id="P32729">
    <property type="interactions" value="55"/>
</dbReference>
<dbReference type="STRING" id="224308.BSU16620"/>
<dbReference type="PaxDb" id="224308-BSU16620"/>
<dbReference type="EnsemblBacteria" id="CAB13535">
    <property type="protein sequence ID" value="CAB13535"/>
    <property type="gene ID" value="BSU_16620"/>
</dbReference>
<dbReference type="GeneID" id="939626"/>
<dbReference type="KEGG" id="bsu:BSU16620"/>
<dbReference type="PATRIC" id="fig|224308.179.peg.1803"/>
<dbReference type="eggNOG" id="COG1358">
    <property type="taxonomic scope" value="Bacteria"/>
</dbReference>
<dbReference type="InParanoid" id="P32729"/>
<dbReference type="OrthoDB" id="9794863at2"/>
<dbReference type="PhylomeDB" id="P32729"/>
<dbReference type="BioCyc" id="BSUB:BSU16620-MONOMER"/>
<dbReference type="EvolutionaryTrace" id="P32729"/>
<dbReference type="PRO" id="PR:P32729"/>
<dbReference type="Proteomes" id="UP000001570">
    <property type="component" value="Chromosome"/>
</dbReference>
<dbReference type="GO" id="GO:1990904">
    <property type="term" value="C:ribonucleoprotein complex"/>
    <property type="evidence" value="ECO:0007669"/>
    <property type="project" value="InterPro"/>
</dbReference>
<dbReference type="GO" id="GO:0003723">
    <property type="term" value="F:RNA binding"/>
    <property type="evidence" value="ECO:0007669"/>
    <property type="project" value="UniProtKB-KW"/>
</dbReference>
<dbReference type="GO" id="GO:0042254">
    <property type="term" value="P:ribosome biogenesis"/>
    <property type="evidence" value="ECO:0007669"/>
    <property type="project" value="InterPro"/>
</dbReference>
<dbReference type="Gene3D" id="3.30.1330.30">
    <property type="match status" value="1"/>
</dbReference>
<dbReference type="InterPro" id="IPR029064">
    <property type="entry name" value="Ribosomal_eL30-like_sf"/>
</dbReference>
<dbReference type="InterPro" id="IPR004037">
    <property type="entry name" value="Ribosomal_eL8-like_CS"/>
</dbReference>
<dbReference type="InterPro" id="IPR004038">
    <property type="entry name" value="Ribosomal_eL8/eL30/eS12/Gad45"/>
</dbReference>
<dbReference type="NCBIfam" id="NF005825">
    <property type="entry name" value="PRK07714.1"/>
    <property type="match status" value="1"/>
</dbReference>
<dbReference type="Pfam" id="PF01248">
    <property type="entry name" value="Ribosomal_L7Ae"/>
    <property type="match status" value="1"/>
</dbReference>
<dbReference type="SUPFAM" id="SSF55315">
    <property type="entry name" value="L30e-like"/>
    <property type="match status" value="1"/>
</dbReference>
<dbReference type="PROSITE" id="PS01082">
    <property type="entry name" value="RIBOSOMAL_L7AE"/>
    <property type="match status" value="1"/>
</dbReference>
<feature type="chain" id="PRO_0000136786" description="RNA-binding protein YlxQ">
    <location>
        <begin position="1"/>
        <end position="100"/>
    </location>
</feature>
<feature type="helix" evidence="9">
    <location>
        <begin position="6"/>
        <end position="15"/>
    </location>
</feature>
<feature type="strand" evidence="9">
    <location>
        <begin position="19"/>
        <end position="22"/>
    </location>
</feature>
<feature type="helix" evidence="9">
    <location>
        <begin position="23"/>
        <end position="31"/>
    </location>
</feature>
<feature type="strand" evidence="9">
    <location>
        <begin position="36"/>
        <end position="41"/>
    </location>
</feature>
<feature type="helix" evidence="9">
    <location>
        <begin position="46"/>
        <end position="58"/>
    </location>
</feature>
<feature type="strand" evidence="9">
    <location>
        <begin position="63"/>
        <end position="67"/>
    </location>
</feature>
<feature type="helix" evidence="9">
    <location>
        <begin position="69"/>
        <end position="75"/>
    </location>
</feature>
<feature type="strand" evidence="9">
    <location>
        <begin position="82"/>
        <end position="86"/>
    </location>
</feature>
<feature type="helix" evidence="9">
    <location>
        <begin position="89"/>
        <end position="98"/>
    </location>
</feature>
<sequence length="100" mass="11054">MSGMEWFPLLGLANRARKVVSGEDLVIKEIRNARAKLVLLTEDASSNTAKKVTDKCNYYKVPYKKVESRAVLGRSIGKEARVVVAVTDQGFANKLISLLD</sequence>
<gene>
    <name evidence="8" type="primary">rulQ</name>
    <name type="synonym">rplGA</name>
    <name evidence="4" type="synonym">ylxQ</name>
    <name evidence="3" type="synonym">ymxC</name>
    <name type="ordered locus">BSU16620</name>
</gene>
<comment type="function">
    <text evidence="2">RNA-binding protein that recognizes the K-turn motif present in ribosomal RNA, but also in box C/D and box C'/D' sRNAs.</text>
</comment>
<comment type="disruption phenotype">
    <text evidence="1">None; has no effect on viability, growth or sporulation at low, normal or elevated temperatures.</text>
</comment>
<comment type="similarity">
    <text evidence="6 7">Belongs to the eukaryotic ribosomal protein eL8 family.</text>
</comment>
<reference key="1">
    <citation type="journal article" date="1993" name="J. Bacteriol.">
        <title>Similar organization of the nusA-infB operon in Bacillus subtilis and Escherichia coli.</title>
        <authorList>
            <person name="Shazand K."/>
            <person name="Tucker J."/>
            <person name="Grunberg-Manago M."/>
            <person name="Rabinowitz J.C."/>
            <person name="Leighton T."/>
        </authorList>
    </citation>
    <scope>NUCLEOTIDE SEQUENCE [GENOMIC DNA]</scope>
    <source>
        <strain>168</strain>
    </source>
</reference>
<reference key="2">
    <citation type="journal article" date="1997" name="Nature">
        <title>The complete genome sequence of the Gram-positive bacterium Bacillus subtilis.</title>
        <authorList>
            <person name="Kunst F."/>
            <person name="Ogasawara N."/>
            <person name="Moszer I."/>
            <person name="Albertini A.M."/>
            <person name="Alloni G."/>
            <person name="Azevedo V."/>
            <person name="Bertero M.G."/>
            <person name="Bessieres P."/>
            <person name="Bolotin A."/>
            <person name="Borchert S."/>
            <person name="Borriss R."/>
            <person name="Boursier L."/>
            <person name="Brans A."/>
            <person name="Braun M."/>
            <person name="Brignell S.C."/>
            <person name="Bron S."/>
            <person name="Brouillet S."/>
            <person name="Bruschi C.V."/>
            <person name="Caldwell B."/>
            <person name="Capuano V."/>
            <person name="Carter N.M."/>
            <person name="Choi S.-K."/>
            <person name="Codani J.-J."/>
            <person name="Connerton I.F."/>
            <person name="Cummings N.J."/>
            <person name="Daniel R.A."/>
            <person name="Denizot F."/>
            <person name="Devine K.M."/>
            <person name="Duesterhoeft A."/>
            <person name="Ehrlich S.D."/>
            <person name="Emmerson P.T."/>
            <person name="Entian K.-D."/>
            <person name="Errington J."/>
            <person name="Fabret C."/>
            <person name="Ferrari E."/>
            <person name="Foulger D."/>
            <person name="Fritz C."/>
            <person name="Fujita M."/>
            <person name="Fujita Y."/>
            <person name="Fuma S."/>
            <person name="Galizzi A."/>
            <person name="Galleron N."/>
            <person name="Ghim S.-Y."/>
            <person name="Glaser P."/>
            <person name="Goffeau A."/>
            <person name="Golightly E.J."/>
            <person name="Grandi G."/>
            <person name="Guiseppi G."/>
            <person name="Guy B.J."/>
            <person name="Haga K."/>
            <person name="Haiech J."/>
            <person name="Harwood C.R."/>
            <person name="Henaut A."/>
            <person name="Hilbert H."/>
            <person name="Holsappel S."/>
            <person name="Hosono S."/>
            <person name="Hullo M.-F."/>
            <person name="Itaya M."/>
            <person name="Jones L.-M."/>
            <person name="Joris B."/>
            <person name="Karamata D."/>
            <person name="Kasahara Y."/>
            <person name="Klaerr-Blanchard M."/>
            <person name="Klein C."/>
            <person name="Kobayashi Y."/>
            <person name="Koetter P."/>
            <person name="Koningstein G."/>
            <person name="Krogh S."/>
            <person name="Kumano M."/>
            <person name="Kurita K."/>
            <person name="Lapidus A."/>
            <person name="Lardinois S."/>
            <person name="Lauber J."/>
            <person name="Lazarevic V."/>
            <person name="Lee S.-M."/>
            <person name="Levine A."/>
            <person name="Liu H."/>
            <person name="Masuda S."/>
            <person name="Mauel C."/>
            <person name="Medigue C."/>
            <person name="Medina N."/>
            <person name="Mellado R.P."/>
            <person name="Mizuno M."/>
            <person name="Moestl D."/>
            <person name="Nakai S."/>
            <person name="Noback M."/>
            <person name="Noone D."/>
            <person name="O'Reilly M."/>
            <person name="Ogawa K."/>
            <person name="Ogiwara A."/>
            <person name="Oudega B."/>
            <person name="Park S.-H."/>
            <person name="Parro V."/>
            <person name="Pohl T.M."/>
            <person name="Portetelle D."/>
            <person name="Porwollik S."/>
            <person name="Prescott A.M."/>
            <person name="Presecan E."/>
            <person name="Pujic P."/>
            <person name="Purnelle B."/>
            <person name="Rapoport G."/>
            <person name="Rey M."/>
            <person name="Reynolds S."/>
            <person name="Rieger M."/>
            <person name="Rivolta C."/>
            <person name="Rocha E."/>
            <person name="Roche B."/>
            <person name="Rose M."/>
            <person name="Sadaie Y."/>
            <person name="Sato T."/>
            <person name="Scanlan E."/>
            <person name="Schleich S."/>
            <person name="Schroeter R."/>
            <person name="Scoffone F."/>
            <person name="Sekiguchi J."/>
            <person name="Sekowska A."/>
            <person name="Seror S.J."/>
            <person name="Serror P."/>
            <person name="Shin B.-S."/>
            <person name="Soldo B."/>
            <person name="Sorokin A."/>
            <person name="Tacconi E."/>
            <person name="Takagi T."/>
            <person name="Takahashi H."/>
            <person name="Takemaru K."/>
            <person name="Takeuchi M."/>
            <person name="Tamakoshi A."/>
            <person name="Tanaka T."/>
            <person name="Terpstra P."/>
            <person name="Tognoni A."/>
            <person name="Tosato V."/>
            <person name="Uchiyama S."/>
            <person name="Vandenbol M."/>
            <person name="Vannier F."/>
            <person name="Vassarotti A."/>
            <person name="Viari A."/>
            <person name="Wambutt R."/>
            <person name="Wedler E."/>
            <person name="Wedler H."/>
            <person name="Weitzenegger T."/>
            <person name="Winters P."/>
            <person name="Wipat A."/>
            <person name="Yamamoto H."/>
            <person name="Yamane K."/>
            <person name="Yasumoto K."/>
            <person name="Yata K."/>
            <person name="Yoshida K."/>
            <person name="Yoshikawa H.-F."/>
            <person name="Zumstein E."/>
            <person name="Yoshikawa H."/>
            <person name="Danchin A."/>
        </authorList>
    </citation>
    <scope>NUCLEOTIDE SEQUENCE [LARGE SCALE GENOMIC DNA]</scope>
    <source>
        <strain>168</strain>
    </source>
</reference>
<reference key="3">
    <citation type="journal article" date="2007" name="J. Bacteriol.">
        <title>YbxF, a protein associated with exponential-phase ribosomes in Bacillus subtilis.</title>
        <authorList>
            <person name="Sojka L."/>
            <person name="Fucik V."/>
            <person name="Krasny L."/>
            <person name="Barvik I."/>
            <person name="Jonak J."/>
        </authorList>
    </citation>
    <scope>DISRUPTION PHENOTYPE</scope>
    <source>
        <strain>168</strain>
    </source>
</reference>
<reference key="4">
    <citation type="journal article" date="2012" name="RNA">
        <title>YbxF and YlxQ are bacterial homologs of L7Ae and bind K-turns but not K-loops.</title>
        <authorList>
            <person name="Baird N.J."/>
            <person name="Zhang J."/>
            <person name="Hamma T."/>
            <person name="Ferre-D'Amare A.R."/>
        </authorList>
    </citation>
    <scope>X-RAY CRYSTALLOGRAPHY (1.55 ANGSTROMS)</scope>
    <scope>FUNCTION</scope>
    <scope>RNA-BINDING</scope>
</reference>
<evidence type="ECO:0000269" key="1">
    <source>
    </source>
</evidence>
<evidence type="ECO:0000269" key="2">
    <source>
    </source>
</evidence>
<evidence type="ECO:0000303" key="3">
    <source>
    </source>
</evidence>
<evidence type="ECO:0000303" key="4">
    <source>
    </source>
</evidence>
<evidence type="ECO:0000305" key="5"/>
<evidence type="ECO:0000305" key="6">
    <source>
    </source>
</evidence>
<evidence type="ECO:0000305" key="7">
    <source>
    </source>
</evidence>
<evidence type="ECO:0000312" key="8">
    <source>
        <dbReference type="EMBL" id="CAB13535.1"/>
    </source>
</evidence>
<evidence type="ECO:0007829" key="9">
    <source>
        <dbReference type="PDB" id="3V7Q"/>
    </source>
</evidence>
<organism>
    <name type="scientific">Bacillus subtilis (strain 168)</name>
    <dbReference type="NCBI Taxonomy" id="224308"/>
    <lineage>
        <taxon>Bacteria</taxon>
        <taxon>Bacillati</taxon>
        <taxon>Bacillota</taxon>
        <taxon>Bacilli</taxon>
        <taxon>Bacillales</taxon>
        <taxon>Bacillaceae</taxon>
        <taxon>Bacillus</taxon>
    </lineage>
</organism>
<name>YLXQ_BACSU</name>
<accession>P32729</accession>